<name>PBPA_CLOPE</name>
<proteinExistence type="inferred from homology"/>
<organism>
    <name type="scientific">Clostridium perfringens (strain 13 / Type A)</name>
    <dbReference type="NCBI Taxonomy" id="195102"/>
    <lineage>
        <taxon>Bacteria</taxon>
        <taxon>Bacillati</taxon>
        <taxon>Bacillota</taxon>
        <taxon>Clostridia</taxon>
        <taxon>Eubacteriales</taxon>
        <taxon>Clostridiaceae</taxon>
        <taxon>Clostridium</taxon>
    </lineage>
</organism>
<comment type="function">
    <text evidence="1">Cell wall formation. Synthesis of cross-linked peptidoglycan from the lipid intermediates. The enzyme has a penicillin-insensitive transglycosylase N-terminal domain (formation of linear glycan strands) and a penicillin-sensitive transpeptidase C-terminal domain (cross-linking of the peptide subunits).</text>
</comment>
<comment type="catalytic activity">
    <reaction evidence="2">
        <text>[GlcNAc-(1-&gt;4)-Mur2Ac(oyl-L-Ala-gamma-D-Glu-L-Lys-D-Ala-D-Ala)](n)-di-trans,octa-cis-undecaprenyl diphosphate + beta-D-GlcNAc-(1-&gt;4)-Mur2Ac(oyl-L-Ala-gamma-D-Glu-L-Lys-D-Ala-D-Ala)-di-trans,octa-cis-undecaprenyl diphosphate = [GlcNAc-(1-&gt;4)-Mur2Ac(oyl-L-Ala-gamma-D-Glu-L-Lys-D-Ala-D-Ala)](n+1)-di-trans,octa-cis-undecaprenyl diphosphate + di-trans,octa-cis-undecaprenyl diphosphate + H(+)</text>
        <dbReference type="Rhea" id="RHEA:23708"/>
        <dbReference type="Rhea" id="RHEA-COMP:9602"/>
        <dbReference type="Rhea" id="RHEA-COMP:9603"/>
        <dbReference type="ChEBI" id="CHEBI:15378"/>
        <dbReference type="ChEBI" id="CHEBI:58405"/>
        <dbReference type="ChEBI" id="CHEBI:60033"/>
        <dbReference type="ChEBI" id="CHEBI:78435"/>
        <dbReference type="EC" id="2.4.99.28"/>
    </reaction>
</comment>
<comment type="catalytic activity">
    <reaction evidence="2">
        <text>Preferential cleavage: (Ac)2-L-Lys-D-Ala-|-D-Ala. Also transpeptidation of peptidyl-alanyl moieties that are N-acyl substituents of D-alanine.</text>
        <dbReference type="EC" id="3.4.16.4"/>
    </reaction>
</comment>
<comment type="pathway">
    <text>Cell wall biogenesis; peptidoglycan biosynthesis.</text>
</comment>
<comment type="subcellular location">
    <subcellularLocation>
        <location evidence="6">Cell membrane</location>
        <topology evidence="6">Single-pass type II membrane protein</topology>
    </subcellularLocation>
</comment>
<comment type="similarity">
    <text evidence="6">In the N-terminal section; belongs to the glycosyltransferase 51 family.</text>
</comment>
<comment type="similarity">
    <text evidence="6">In the C-terminal section; belongs to the transpeptidase family.</text>
</comment>
<feature type="chain" id="PRO_0000321877" description="Penicillin-binding protein 1A">
    <location>
        <begin position="1"/>
        <end position="679"/>
    </location>
</feature>
<feature type="topological domain" description="Cytoplasmic" evidence="4">
    <location>
        <begin position="1"/>
        <end position="30"/>
    </location>
</feature>
<feature type="transmembrane region" description="Helical; Signal-anchor for type II membrane protein" evidence="4">
    <location>
        <begin position="31"/>
        <end position="51"/>
    </location>
</feature>
<feature type="topological domain" description="Extracellular" evidence="4">
    <location>
        <begin position="52"/>
        <end position="679"/>
    </location>
</feature>
<feature type="region of interest" description="Disordered" evidence="5">
    <location>
        <begin position="1"/>
        <end position="20"/>
    </location>
</feature>
<feature type="region of interest" description="Transglycosylase" evidence="1">
    <location>
        <begin position="72"/>
        <end position="244"/>
    </location>
</feature>
<feature type="region of interest" description="Transpeptidase" evidence="1">
    <location>
        <begin position="378"/>
        <end position="663"/>
    </location>
</feature>
<feature type="compositionally biased region" description="Basic residues" evidence="5">
    <location>
        <begin position="1"/>
        <end position="14"/>
    </location>
</feature>
<feature type="active site" description="Proton donor; for transglycosylase activity" evidence="3">
    <location>
        <position position="111"/>
    </location>
</feature>
<feature type="active site" description="Acyl-ester intermediate; for transpeptidase activity" evidence="3">
    <location>
        <position position="417"/>
    </location>
</feature>
<sequence length="679" mass="75177">MTERKREHKDRKQNKNSPKNQSKVTKFLKWFFIGILLLGITAVTVVGIYVLSIIRSSPELDVQAIQSLNQPSILYDDQGNFMDNVITREQRYVVKSEEIPDNLKKAFVAIEDERFYEHKGIDIKRIFGVIASNIKGKLSGSNTVQGASTITQQLIKNAVLTNEVSYERKIKEMYLALELEKHLSKDEILTTYLNTIPMGGYQYGVSAAAQRFFSKNVSDLNLVECAYLGGLTQAPTSYDGLSEANKENPSRYLNRTKSVLFKMHELGYISSEQYNDAINEIDTNGIKFTPNNKLSKTNFEWFTRPAITQVKQDLMDKYKYTQEEVDKLIANGGLKIYTSMDRNLQNNVQKVLDDPNNYKAITNNPNEKNEDGVYKLQASATIIDYKTGHVKALVGGRGEQPAMSHNRAYYDLKSIGSATKPLTVYGPAIDLGLGGAGSVVNDSPLSNKELSSTGYKDQPKNEYNSYRGPLTFREAIKISSNLAAIKVANEVGVSNSIAYGEKLGLVYGPHSRGISTTALGQFQNDPNNPDGGNTYTLASAFGVFGNNGVKTNAKLYTKVLDSHGNVILDTSTPEETKIFSPQASYIVYDMLKDQVESGSAKSAKFGNIPVAGKTGTTTGDKDYLFAGLTPYYSAAIWIGYDKPREMRTSSGTVTSPIFGKIMGLAHKDLQYKEVDNLVE</sequence>
<evidence type="ECO:0000250" key="1"/>
<evidence type="ECO:0000250" key="2">
    <source>
        <dbReference type="UniProtKB" id="P02918"/>
    </source>
</evidence>
<evidence type="ECO:0000250" key="3">
    <source>
        <dbReference type="UniProtKB" id="P02919"/>
    </source>
</evidence>
<evidence type="ECO:0000255" key="4"/>
<evidence type="ECO:0000256" key="5">
    <source>
        <dbReference type="SAM" id="MobiDB-lite"/>
    </source>
</evidence>
<evidence type="ECO:0000305" key="6"/>
<gene>
    <name type="primary">pbpA</name>
    <name type="ordered locus">CPE1962</name>
</gene>
<keyword id="KW-0046">Antibiotic resistance</keyword>
<keyword id="KW-0121">Carboxypeptidase</keyword>
<keyword id="KW-1003">Cell membrane</keyword>
<keyword id="KW-0133">Cell shape</keyword>
<keyword id="KW-0961">Cell wall biogenesis/degradation</keyword>
<keyword id="KW-0328">Glycosyltransferase</keyword>
<keyword id="KW-0378">Hydrolase</keyword>
<keyword id="KW-0472">Membrane</keyword>
<keyword id="KW-0511">Multifunctional enzyme</keyword>
<keyword id="KW-0573">Peptidoglycan synthesis</keyword>
<keyword id="KW-0645">Protease</keyword>
<keyword id="KW-1185">Reference proteome</keyword>
<keyword id="KW-0735">Signal-anchor</keyword>
<keyword id="KW-0808">Transferase</keyword>
<keyword id="KW-0812">Transmembrane</keyword>
<keyword id="KW-1133">Transmembrane helix</keyword>
<accession>Q8XJ01</accession>
<reference key="1">
    <citation type="journal article" date="2002" name="Proc. Natl. Acad. Sci. U.S.A.">
        <title>Complete genome sequence of Clostridium perfringens, an anaerobic flesh-eater.</title>
        <authorList>
            <person name="Shimizu T."/>
            <person name="Ohtani K."/>
            <person name="Hirakawa H."/>
            <person name="Ohshima K."/>
            <person name="Yamashita A."/>
            <person name="Shiba T."/>
            <person name="Ogasawara N."/>
            <person name="Hattori M."/>
            <person name="Kuhara S."/>
            <person name="Hayashi H."/>
        </authorList>
    </citation>
    <scope>NUCLEOTIDE SEQUENCE [LARGE SCALE GENOMIC DNA]</scope>
    <source>
        <strain>13 / Type A</strain>
    </source>
</reference>
<protein>
    <recommendedName>
        <fullName>Penicillin-binding protein 1A</fullName>
        <shortName>PBP1</shortName>
    </recommendedName>
    <domain>
        <recommendedName>
            <fullName>Penicillin-insensitive transglycosylase</fullName>
            <ecNumber evidence="2">2.4.99.28</ecNumber>
        </recommendedName>
        <alternativeName>
            <fullName>Peptidoglycan TGase</fullName>
        </alternativeName>
    </domain>
    <domain>
        <recommendedName>
            <fullName>Penicillin-sensitive transpeptidase</fullName>
            <ecNumber evidence="2">3.4.16.4</ecNumber>
        </recommendedName>
        <alternativeName>
            <fullName>DD-transpeptidase</fullName>
        </alternativeName>
    </domain>
</protein>
<dbReference type="EC" id="2.4.99.28" evidence="2"/>
<dbReference type="EC" id="3.4.16.4" evidence="2"/>
<dbReference type="EMBL" id="BA000016">
    <property type="protein sequence ID" value="BAB81668.1"/>
    <property type="molecule type" value="Genomic_DNA"/>
</dbReference>
<dbReference type="RefSeq" id="WP_011010706.1">
    <property type="nucleotide sequence ID" value="NC_003366.1"/>
</dbReference>
<dbReference type="SMR" id="Q8XJ01"/>
<dbReference type="STRING" id="195102.gene:10491231"/>
<dbReference type="DrugBank" id="DB01061">
    <property type="generic name" value="Azlocillin"/>
</dbReference>
<dbReference type="DrugBank" id="DB00833">
    <property type="generic name" value="Cefaclor"/>
</dbReference>
<dbReference type="DrugBank" id="DB00456">
    <property type="generic name" value="Cefalotin"/>
</dbReference>
<dbReference type="DrugBank" id="DB01139">
    <property type="generic name" value="Cefapirin"/>
</dbReference>
<dbReference type="DrugBank" id="DB01066">
    <property type="generic name" value="Cefditoren"/>
</dbReference>
<dbReference type="DrugBank" id="DB00267">
    <property type="generic name" value="Cefmenoxime"/>
</dbReference>
<dbReference type="DrugBank" id="DB00229">
    <property type="generic name" value="Cefotiam"/>
</dbReference>
<dbReference type="DrugBank" id="DB01112">
    <property type="generic name" value="Cefuroxime"/>
</dbReference>
<dbReference type="DrugBank" id="DB04133">
    <property type="generic name" value="Degraded Cephaloridine"/>
</dbReference>
<dbReference type="DrugBank" id="DB00301">
    <property type="generic name" value="Flucloxacillin"/>
</dbReference>
<dbReference type="DrugBank" id="DB00447">
    <property type="generic name" value="Loracarbef"/>
</dbReference>
<dbReference type="DrugBank" id="DB00948">
    <property type="generic name" value="Mezlocillin"/>
</dbReference>
<dbReference type="DrugBank" id="DB00713">
    <property type="generic name" value="Oxacillin"/>
</dbReference>
<dbReference type="DrugBank" id="DB00417">
    <property type="generic name" value="Phenoxymethylpenicillin"/>
</dbReference>
<dbReference type="DrugBank" id="DB01604">
    <property type="generic name" value="Pivampicillin"/>
</dbReference>
<dbReference type="DrugBank" id="DB01605">
    <property type="generic name" value="Pivmecillinam"/>
</dbReference>
<dbReference type="DrugCentral" id="Q8XJ01"/>
<dbReference type="CAZy" id="GT51">
    <property type="family name" value="Glycosyltransferase Family 51"/>
</dbReference>
<dbReference type="KEGG" id="cpe:CPE1962"/>
<dbReference type="HOGENOM" id="CLU_006354_2_2_9"/>
<dbReference type="UniPathway" id="UPA00219"/>
<dbReference type="Proteomes" id="UP000000818">
    <property type="component" value="Chromosome"/>
</dbReference>
<dbReference type="GO" id="GO:0030288">
    <property type="term" value="C:outer membrane-bounded periplasmic space"/>
    <property type="evidence" value="ECO:0007669"/>
    <property type="project" value="TreeGrafter"/>
</dbReference>
<dbReference type="GO" id="GO:0005886">
    <property type="term" value="C:plasma membrane"/>
    <property type="evidence" value="ECO:0007669"/>
    <property type="project" value="UniProtKB-SubCell"/>
</dbReference>
<dbReference type="GO" id="GO:0008658">
    <property type="term" value="F:penicillin binding"/>
    <property type="evidence" value="ECO:0007669"/>
    <property type="project" value="InterPro"/>
</dbReference>
<dbReference type="GO" id="GO:0008955">
    <property type="term" value="F:peptidoglycan glycosyltransferase activity"/>
    <property type="evidence" value="ECO:0007669"/>
    <property type="project" value="RHEA"/>
</dbReference>
<dbReference type="GO" id="GO:0009002">
    <property type="term" value="F:serine-type D-Ala-D-Ala carboxypeptidase activity"/>
    <property type="evidence" value="ECO:0007669"/>
    <property type="project" value="UniProtKB-EC"/>
</dbReference>
<dbReference type="GO" id="GO:0071555">
    <property type="term" value="P:cell wall organization"/>
    <property type="evidence" value="ECO:0007669"/>
    <property type="project" value="UniProtKB-KW"/>
</dbReference>
<dbReference type="GO" id="GO:0009252">
    <property type="term" value="P:peptidoglycan biosynthetic process"/>
    <property type="evidence" value="ECO:0007669"/>
    <property type="project" value="UniProtKB-UniPathway"/>
</dbReference>
<dbReference type="GO" id="GO:0006508">
    <property type="term" value="P:proteolysis"/>
    <property type="evidence" value="ECO:0007669"/>
    <property type="project" value="UniProtKB-KW"/>
</dbReference>
<dbReference type="GO" id="GO:0008360">
    <property type="term" value="P:regulation of cell shape"/>
    <property type="evidence" value="ECO:0007669"/>
    <property type="project" value="UniProtKB-KW"/>
</dbReference>
<dbReference type="GO" id="GO:0046677">
    <property type="term" value="P:response to antibiotic"/>
    <property type="evidence" value="ECO:0007669"/>
    <property type="project" value="UniProtKB-KW"/>
</dbReference>
<dbReference type="FunFam" id="1.10.3810.10:FF:000001">
    <property type="entry name" value="Penicillin-binding protein 1A"/>
    <property type="match status" value="1"/>
</dbReference>
<dbReference type="Gene3D" id="1.10.3810.10">
    <property type="entry name" value="Biosynthetic peptidoglycan transglycosylase-like"/>
    <property type="match status" value="1"/>
</dbReference>
<dbReference type="Gene3D" id="3.40.710.10">
    <property type="entry name" value="DD-peptidase/beta-lactamase superfamily"/>
    <property type="match status" value="1"/>
</dbReference>
<dbReference type="InterPro" id="IPR012338">
    <property type="entry name" value="Beta-lactam/transpept-like"/>
</dbReference>
<dbReference type="InterPro" id="IPR001264">
    <property type="entry name" value="Glyco_trans_51"/>
</dbReference>
<dbReference type="InterPro" id="IPR050396">
    <property type="entry name" value="Glycosyltr_51/Transpeptidase"/>
</dbReference>
<dbReference type="InterPro" id="IPR023346">
    <property type="entry name" value="Lysozyme-like_dom_sf"/>
</dbReference>
<dbReference type="InterPro" id="IPR036950">
    <property type="entry name" value="PBP_transglycosylase"/>
</dbReference>
<dbReference type="InterPro" id="IPR001460">
    <property type="entry name" value="PCN-bd_Tpept"/>
</dbReference>
<dbReference type="NCBIfam" id="TIGR02074">
    <property type="entry name" value="PBP_1a_fam"/>
    <property type="match status" value="1"/>
</dbReference>
<dbReference type="PANTHER" id="PTHR32282">
    <property type="entry name" value="BINDING PROTEIN TRANSPEPTIDASE, PUTATIVE-RELATED"/>
    <property type="match status" value="1"/>
</dbReference>
<dbReference type="PANTHER" id="PTHR32282:SF11">
    <property type="entry name" value="PENICILLIN-BINDING PROTEIN 1B"/>
    <property type="match status" value="1"/>
</dbReference>
<dbReference type="Pfam" id="PF00912">
    <property type="entry name" value="Transgly"/>
    <property type="match status" value="1"/>
</dbReference>
<dbReference type="Pfam" id="PF00905">
    <property type="entry name" value="Transpeptidase"/>
    <property type="match status" value="1"/>
</dbReference>
<dbReference type="SUPFAM" id="SSF56601">
    <property type="entry name" value="beta-lactamase/transpeptidase-like"/>
    <property type="match status" value="1"/>
</dbReference>
<dbReference type="SUPFAM" id="SSF53955">
    <property type="entry name" value="Lysozyme-like"/>
    <property type="match status" value="1"/>
</dbReference>